<reference key="1">
    <citation type="journal article" date="2007" name="PLoS Genet.">
        <title>Patterns and implications of gene gain and loss in the evolution of Prochlorococcus.</title>
        <authorList>
            <person name="Kettler G.C."/>
            <person name="Martiny A.C."/>
            <person name="Huang K."/>
            <person name="Zucker J."/>
            <person name="Coleman M.L."/>
            <person name="Rodrigue S."/>
            <person name="Chen F."/>
            <person name="Lapidus A."/>
            <person name="Ferriera S."/>
            <person name="Johnson J."/>
            <person name="Steglich C."/>
            <person name="Church G.M."/>
            <person name="Richardson P."/>
            <person name="Chisholm S.W."/>
        </authorList>
    </citation>
    <scope>NUCLEOTIDE SEQUENCE [LARGE SCALE GENOMIC DNA]</scope>
    <source>
        <strain>MIT 9515</strain>
    </source>
</reference>
<keyword id="KW-0687">Ribonucleoprotein</keyword>
<keyword id="KW-0689">Ribosomal protein</keyword>
<gene>
    <name evidence="1" type="primary">rplQ</name>
    <name evidence="1" type="synonym">rpl17</name>
    <name type="ordered locus">P9515_17161</name>
</gene>
<protein>
    <recommendedName>
        <fullName evidence="1">Large ribosomal subunit protein bL17</fullName>
    </recommendedName>
    <alternativeName>
        <fullName evidence="2">50S ribosomal protein L17</fullName>
    </alternativeName>
</protein>
<name>RL17_PROM5</name>
<accession>A2BYR2</accession>
<evidence type="ECO:0000255" key="1">
    <source>
        <dbReference type="HAMAP-Rule" id="MF_01368"/>
    </source>
</evidence>
<evidence type="ECO:0000305" key="2"/>
<sequence length="116" mass="13260">MRHQLRIPLLSKPADQRKALLRGLTTQLIREGRVTTTKARAKALRNETERMISLAKEGTLAARRRAIGYIYDKKLVHSLFEKAQERYGDRNGGYTRIVRTVARKGDNAQMAIIELV</sequence>
<dbReference type="EMBL" id="CP000552">
    <property type="protein sequence ID" value="ABM72923.1"/>
    <property type="molecule type" value="Genomic_DNA"/>
</dbReference>
<dbReference type="RefSeq" id="WP_011821015.1">
    <property type="nucleotide sequence ID" value="NC_008817.1"/>
</dbReference>
<dbReference type="SMR" id="A2BYR2"/>
<dbReference type="STRING" id="167542.P9515_17161"/>
<dbReference type="GeneID" id="60201406"/>
<dbReference type="KEGG" id="pmc:P9515_17161"/>
<dbReference type="eggNOG" id="COG0203">
    <property type="taxonomic scope" value="Bacteria"/>
</dbReference>
<dbReference type="HOGENOM" id="CLU_074407_2_2_3"/>
<dbReference type="OrthoDB" id="9809073at2"/>
<dbReference type="Proteomes" id="UP000001589">
    <property type="component" value="Chromosome"/>
</dbReference>
<dbReference type="GO" id="GO:0022625">
    <property type="term" value="C:cytosolic large ribosomal subunit"/>
    <property type="evidence" value="ECO:0007669"/>
    <property type="project" value="TreeGrafter"/>
</dbReference>
<dbReference type="GO" id="GO:0003735">
    <property type="term" value="F:structural constituent of ribosome"/>
    <property type="evidence" value="ECO:0007669"/>
    <property type="project" value="InterPro"/>
</dbReference>
<dbReference type="GO" id="GO:0006412">
    <property type="term" value="P:translation"/>
    <property type="evidence" value="ECO:0007669"/>
    <property type="project" value="UniProtKB-UniRule"/>
</dbReference>
<dbReference type="FunFam" id="3.90.1030.10:FF:000001">
    <property type="entry name" value="50S ribosomal protein L17"/>
    <property type="match status" value="1"/>
</dbReference>
<dbReference type="Gene3D" id="3.90.1030.10">
    <property type="entry name" value="Ribosomal protein L17"/>
    <property type="match status" value="1"/>
</dbReference>
<dbReference type="HAMAP" id="MF_01368">
    <property type="entry name" value="Ribosomal_bL17"/>
    <property type="match status" value="1"/>
</dbReference>
<dbReference type="InterPro" id="IPR000456">
    <property type="entry name" value="Ribosomal_bL17"/>
</dbReference>
<dbReference type="InterPro" id="IPR036373">
    <property type="entry name" value="Ribosomal_bL17_sf"/>
</dbReference>
<dbReference type="NCBIfam" id="TIGR00059">
    <property type="entry name" value="L17"/>
    <property type="match status" value="1"/>
</dbReference>
<dbReference type="PANTHER" id="PTHR14413:SF16">
    <property type="entry name" value="LARGE RIBOSOMAL SUBUNIT PROTEIN BL17M"/>
    <property type="match status" value="1"/>
</dbReference>
<dbReference type="PANTHER" id="PTHR14413">
    <property type="entry name" value="RIBOSOMAL PROTEIN L17"/>
    <property type="match status" value="1"/>
</dbReference>
<dbReference type="Pfam" id="PF01196">
    <property type="entry name" value="Ribosomal_L17"/>
    <property type="match status" value="1"/>
</dbReference>
<dbReference type="SUPFAM" id="SSF64263">
    <property type="entry name" value="Prokaryotic ribosomal protein L17"/>
    <property type="match status" value="1"/>
</dbReference>
<comment type="subunit">
    <text evidence="1">Part of the 50S ribosomal subunit. Contacts protein L32.</text>
</comment>
<comment type="similarity">
    <text evidence="1">Belongs to the bacterial ribosomal protein bL17 family.</text>
</comment>
<proteinExistence type="inferred from homology"/>
<organism>
    <name type="scientific">Prochlorococcus marinus (strain MIT 9515)</name>
    <dbReference type="NCBI Taxonomy" id="167542"/>
    <lineage>
        <taxon>Bacteria</taxon>
        <taxon>Bacillati</taxon>
        <taxon>Cyanobacteriota</taxon>
        <taxon>Cyanophyceae</taxon>
        <taxon>Synechococcales</taxon>
        <taxon>Prochlorococcaceae</taxon>
        <taxon>Prochlorococcus</taxon>
    </lineage>
</organism>
<feature type="chain" id="PRO_1000055910" description="Large ribosomal subunit protein bL17">
    <location>
        <begin position="1"/>
        <end position="116"/>
    </location>
</feature>